<feature type="chain" id="PRO_0000284063" description="DnaJ homolog subfamily B member 5">
    <location>
        <begin position="1"/>
        <end position="348"/>
    </location>
</feature>
<feature type="domain" description="J" evidence="1">
    <location>
        <begin position="4"/>
        <end position="68"/>
    </location>
</feature>
<sequence>MGKDYYKILGIPSGANEDEIKKAYRKMALKYHPDKNKEPNAEEKFKEIAEAYDVLSDPKKRGLYDQYGEEGLKTGGGSSGGSSGSFHYTFHGDPHATFASFFGGSNPFDIFFASSRSARPFSGFDPDDMDVDEDDDPFGAFGRFGFNGLSRGPRRAPEPLYPRRKVQDPPVVHELRVSLEEIYHGSTKRMKITRRRLNPDGRTVRTEDKILHIVIKRGWKEGTKITFPKEGDATPDNIPADIVFVLKDKPHAHFRRDGTNVLYSALISLKEALCGCTVNIPTIDGRVIPLPCNDVIKPGTVKRLRGEGLPFPKVPTQRGDLIVEFKVRFPDRLTPQTRQILKQHLPCS</sequence>
<accession>Q5BIP8</accession>
<protein>
    <recommendedName>
        <fullName>DnaJ homolog subfamily B member 5</fullName>
    </recommendedName>
</protein>
<gene>
    <name type="primary">DNAJB5</name>
</gene>
<reference key="1">
    <citation type="journal article" date="2005" name="BMC Genomics">
        <title>Characterization of 954 bovine full-CDS cDNA sequences.</title>
        <authorList>
            <person name="Harhay G.P."/>
            <person name="Sonstegard T.S."/>
            <person name="Keele J.W."/>
            <person name="Heaton M.P."/>
            <person name="Clawson M.L."/>
            <person name="Snelling W.M."/>
            <person name="Wiedmann R.T."/>
            <person name="Van Tassell C.P."/>
            <person name="Smith T.P.L."/>
        </authorList>
    </citation>
    <scope>NUCLEOTIDE SEQUENCE [LARGE SCALE MRNA]</scope>
</reference>
<reference key="2">
    <citation type="submission" date="2006-08" db="EMBL/GenBank/DDBJ databases">
        <authorList>
            <consortium name="NIH - Mammalian Gene Collection (MGC) project"/>
        </authorList>
    </citation>
    <scope>NUCLEOTIDE SEQUENCE [LARGE SCALE MRNA]</scope>
    <source>
        <strain>Hereford</strain>
        <tissue>Brain cortex</tissue>
    </source>
</reference>
<proteinExistence type="evidence at transcript level"/>
<name>DNJB5_BOVIN</name>
<dbReference type="EMBL" id="BT021176">
    <property type="protein sequence ID" value="AAX31358.1"/>
    <property type="molecule type" value="mRNA"/>
</dbReference>
<dbReference type="EMBL" id="BC120323">
    <property type="protein sequence ID" value="AAI20324.1"/>
    <property type="molecule type" value="mRNA"/>
</dbReference>
<dbReference type="RefSeq" id="NP_001014959.1">
    <property type="nucleotide sequence ID" value="NM_001014959.1"/>
</dbReference>
<dbReference type="RefSeq" id="XP_015328020.1">
    <property type="nucleotide sequence ID" value="XM_015472534.1"/>
</dbReference>
<dbReference type="RefSeq" id="XP_015328021.1">
    <property type="nucleotide sequence ID" value="XM_015472535.1"/>
</dbReference>
<dbReference type="SMR" id="Q5BIP8"/>
<dbReference type="FunCoup" id="Q5BIP8">
    <property type="interactions" value="539"/>
</dbReference>
<dbReference type="STRING" id="9913.ENSBTAP00000043310"/>
<dbReference type="PaxDb" id="9913-ENSBTAP00000024375"/>
<dbReference type="Ensembl" id="ENSBTAT00000024375.6">
    <property type="protein sequence ID" value="ENSBTAP00000024375.6"/>
    <property type="gene ID" value="ENSBTAG00000018318.6"/>
</dbReference>
<dbReference type="GeneID" id="540083"/>
<dbReference type="KEGG" id="bta:540083"/>
<dbReference type="CTD" id="25822"/>
<dbReference type="VGNC" id="VGNC:56945">
    <property type="gene designation" value="DNAJB5"/>
</dbReference>
<dbReference type="eggNOG" id="KOG0714">
    <property type="taxonomic scope" value="Eukaryota"/>
</dbReference>
<dbReference type="GeneTree" id="ENSGT00940000156090"/>
<dbReference type="HOGENOM" id="CLU_017633_0_0_1"/>
<dbReference type="InParanoid" id="Q5BIP8"/>
<dbReference type="OrthoDB" id="550424at2759"/>
<dbReference type="TreeFam" id="TF105141"/>
<dbReference type="Proteomes" id="UP000009136">
    <property type="component" value="Chromosome 8"/>
</dbReference>
<dbReference type="GO" id="GO:0005829">
    <property type="term" value="C:cytosol"/>
    <property type="evidence" value="ECO:0000318"/>
    <property type="project" value="GO_Central"/>
</dbReference>
<dbReference type="GO" id="GO:0051087">
    <property type="term" value="F:protein-folding chaperone binding"/>
    <property type="evidence" value="ECO:0000318"/>
    <property type="project" value="GO_Central"/>
</dbReference>
<dbReference type="GO" id="GO:0051082">
    <property type="term" value="F:unfolded protein binding"/>
    <property type="evidence" value="ECO:0000318"/>
    <property type="project" value="GO_Central"/>
</dbReference>
<dbReference type="GO" id="GO:0051085">
    <property type="term" value="P:chaperone cofactor-dependent protein refolding"/>
    <property type="evidence" value="ECO:0000318"/>
    <property type="project" value="GO_Central"/>
</dbReference>
<dbReference type="CDD" id="cd06257">
    <property type="entry name" value="DnaJ"/>
    <property type="match status" value="1"/>
</dbReference>
<dbReference type="CDD" id="cd10747">
    <property type="entry name" value="DnaJ_C"/>
    <property type="match status" value="1"/>
</dbReference>
<dbReference type="FunFam" id="1.10.287.110:FF:000005">
    <property type="entry name" value="DnaJ (Hsp40) homolog, subfamily B, member 4"/>
    <property type="match status" value="1"/>
</dbReference>
<dbReference type="FunFam" id="2.60.260.20:FF:000002">
    <property type="entry name" value="Dnaj homolog subfamily b member"/>
    <property type="match status" value="1"/>
</dbReference>
<dbReference type="FunFam" id="2.60.260.20:FF:000007">
    <property type="entry name" value="dnaJ homolog subfamily B member 5"/>
    <property type="match status" value="1"/>
</dbReference>
<dbReference type="Gene3D" id="1.10.287.110">
    <property type="entry name" value="DnaJ domain"/>
    <property type="match status" value="1"/>
</dbReference>
<dbReference type="Gene3D" id="2.60.260.20">
    <property type="entry name" value="Urease metallochaperone UreE, N-terminal domain"/>
    <property type="match status" value="2"/>
</dbReference>
<dbReference type="InterPro" id="IPR002939">
    <property type="entry name" value="DnaJ_C"/>
</dbReference>
<dbReference type="InterPro" id="IPR001623">
    <property type="entry name" value="DnaJ_domain"/>
</dbReference>
<dbReference type="InterPro" id="IPR018253">
    <property type="entry name" value="DnaJ_domain_CS"/>
</dbReference>
<dbReference type="InterPro" id="IPR051339">
    <property type="entry name" value="DnaJ_subfamily_B"/>
</dbReference>
<dbReference type="InterPro" id="IPR008971">
    <property type="entry name" value="HSP40/DnaJ_pept-bd"/>
</dbReference>
<dbReference type="InterPro" id="IPR036869">
    <property type="entry name" value="J_dom_sf"/>
</dbReference>
<dbReference type="PANTHER" id="PTHR24078:SF553">
    <property type="entry name" value="DNAJ HOMOLOG SUBFAMILY B MEMBER 5"/>
    <property type="match status" value="1"/>
</dbReference>
<dbReference type="PANTHER" id="PTHR24078">
    <property type="entry name" value="DNAJ HOMOLOG SUBFAMILY C MEMBER"/>
    <property type="match status" value="1"/>
</dbReference>
<dbReference type="Pfam" id="PF00226">
    <property type="entry name" value="DnaJ"/>
    <property type="match status" value="1"/>
</dbReference>
<dbReference type="Pfam" id="PF01556">
    <property type="entry name" value="DnaJ_C"/>
    <property type="match status" value="1"/>
</dbReference>
<dbReference type="PRINTS" id="PR00625">
    <property type="entry name" value="JDOMAIN"/>
</dbReference>
<dbReference type="SMART" id="SM00271">
    <property type="entry name" value="DnaJ"/>
    <property type="match status" value="1"/>
</dbReference>
<dbReference type="SUPFAM" id="SSF46565">
    <property type="entry name" value="Chaperone J-domain"/>
    <property type="match status" value="1"/>
</dbReference>
<dbReference type="SUPFAM" id="SSF49493">
    <property type="entry name" value="HSP40/DnaJ peptide-binding domain"/>
    <property type="match status" value="2"/>
</dbReference>
<dbReference type="PROSITE" id="PS00636">
    <property type="entry name" value="DNAJ_1"/>
    <property type="match status" value="1"/>
</dbReference>
<dbReference type="PROSITE" id="PS50076">
    <property type="entry name" value="DNAJ_2"/>
    <property type="match status" value="1"/>
</dbReference>
<organism>
    <name type="scientific">Bos taurus</name>
    <name type="common">Bovine</name>
    <dbReference type="NCBI Taxonomy" id="9913"/>
    <lineage>
        <taxon>Eukaryota</taxon>
        <taxon>Metazoa</taxon>
        <taxon>Chordata</taxon>
        <taxon>Craniata</taxon>
        <taxon>Vertebrata</taxon>
        <taxon>Euteleostomi</taxon>
        <taxon>Mammalia</taxon>
        <taxon>Eutheria</taxon>
        <taxon>Laurasiatheria</taxon>
        <taxon>Artiodactyla</taxon>
        <taxon>Ruminantia</taxon>
        <taxon>Pecora</taxon>
        <taxon>Bovidae</taxon>
        <taxon>Bovinae</taxon>
        <taxon>Bos</taxon>
    </lineage>
</organism>
<evidence type="ECO:0000255" key="1">
    <source>
        <dbReference type="PROSITE-ProRule" id="PRU00286"/>
    </source>
</evidence>
<keyword id="KW-0143">Chaperone</keyword>
<keyword id="KW-1185">Reference proteome</keyword>